<dbReference type="EC" id="1.14.14.19" evidence="2"/>
<dbReference type="EC" id="1.14.14.32" evidence="2"/>
<dbReference type="EMBL" id="AF042278">
    <property type="protein sequence ID" value="AAB97686.1"/>
    <property type="molecule type" value="mRNA"/>
</dbReference>
<dbReference type="SMR" id="O57525"/>
<dbReference type="UniPathway" id="UPA00062"/>
<dbReference type="GO" id="GO:0016020">
    <property type="term" value="C:membrane"/>
    <property type="evidence" value="ECO:0007669"/>
    <property type="project" value="UniProtKB-SubCell"/>
</dbReference>
<dbReference type="GO" id="GO:0020037">
    <property type="term" value="F:heme binding"/>
    <property type="evidence" value="ECO:0007669"/>
    <property type="project" value="InterPro"/>
</dbReference>
<dbReference type="GO" id="GO:0005506">
    <property type="term" value="F:iron ion binding"/>
    <property type="evidence" value="ECO:0007669"/>
    <property type="project" value="InterPro"/>
</dbReference>
<dbReference type="GO" id="GO:0016829">
    <property type="term" value="F:lyase activity"/>
    <property type="evidence" value="ECO:0007669"/>
    <property type="project" value="UniProtKB-KW"/>
</dbReference>
<dbReference type="GO" id="GO:0004508">
    <property type="term" value="F:steroid 17-alpha-monooxygenase activity"/>
    <property type="evidence" value="ECO:0007669"/>
    <property type="project" value="UniProtKB-EC"/>
</dbReference>
<dbReference type="GO" id="GO:0042446">
    <property type="term" value="P:hormone biosynthetic process"/>
    <property type="evidence" value="ECO:0007669"/>
    <property type="project" value="TreeGrafter"/>
</dbReference>
<dbReference type="GO" id="GO:0042448">
    <property type="term" value="P:progesterone metabolic process"/>
    <property type="evidence" value="ECO:0007669"/>
    <property type="project" value="TreeGrafter"/>
</dbReference>
<dbReference type="GO" id="GO:0006694">
    <property type="term" value="P:steroid biosynthetic process"/>
    <property type="evidence" value="ECO:0007669"/>
    <property type="project" value="UniProtKB-UniPathway"/>
</dbReference>
<dbReference type="CDD" id="cd20673">
    <property type="entry name" value="CYP17A1"/>
    <property type="match status" value="1"/>
</dbReference>
<dbReference type="FunFam" id="1.10.630.10:FF:000002">
    <property type="entry name" value="Cytochrome P450 1A1"/>
    <property type="match status" value="1"/>
</dbReference>
<dbReference type="Gene3D" id="1.10.630.10">
    <property type="entry name" value="Cytochrome P450"/>
    <property type="match status" value="1"/>
</dbReference>
<dbReference type="InterPro" id="IPR001128">
    <property type="entry name" value="Cyt_P450"/>
</dbReference>
<dbReference type="InterPro" id="IPR017972">
    <property type="entry name" value="Cyt_P450_CS"/>
</dbReference>
<dbReference type="InterPro" id="IPR002401">
    <property type="entry name" value="Cyt_P450_E_grp-I"/>
</dbReference>
<dbReference type="InterPro" id="IPR036396">
    <property type="entry name" value="Cyt_P450_sf"/>
</dbReference>
<dbReference type="PANTHER" id="PTHR24289">
    <property type="entry name" value="STEROID 17-ALPHA-HYDROXYLASE/17,20 LYASE"/>
    <property type="match status" value="1"/>
</dbReference>
<dbReference type="PANTHER" id="PTHR24289:SF13">
    <property type="entry name" value="STEROID 17-ALPHA-HYDROXYLASE_17,20 LYASE"/>
    <property type="match status" value="1"/>
</dbReference>
<dbReference type="Pfam" id="PF00067">
    <property type="entry name" value="p450"/>
    <property type="match status" value="1"/>
</dbReference>
<dbReference type="PRINTS" id="PR00463">
    <property type="entry name" value="EP450I"/>
</dbReference>
<dbReference type="PRINTS" id="PR00385">
    <property type="entry name" value="P450"/>
</dbReference>
<dbReference type="SUPFAM" id="SSF48264">
    <property type="entry name" value="Cytochrome P450"/>
    <property type="match status" value="1"/>
</dbReference>
<dbReference type="PROSITE" id="PS00086">
    <property type="entry name" value="CYTOCHROME_P450"/>
    <property type="match status" value="1"/>
</dbReference>
<feature type="chain" id="PRO_0000051948" description="Steroid 17-alpha-hydroxylase/17,20 lyase">
    <location>
        <begin position="1"/>
        <end position="519"/>
    </location>
</feature>
<feature type="binding site" description="axial binding residue" evidence="1">
    <location>
        <position position="455"/>
    </location>
    <ligand>
        <name>heme</name>
        <dbReference type="ChEBI" id="CHEBI:30413"/>
    </ligand>
    <ligandPart>
        <name>Fe</name>
        <dbReference type="ChEBI" id="CHEBI:18248"/>
    </ligandPart>
</feature>
<sequence>MKLCFFLLIFIRSFLLFKIKLVRTSEKKWRMGSRSHGDVKHPKSLPSLPVIGSLLHLGKKLPPHILFCNLQKKYGSLYSFMMGSHYVVVVNNHEDAREVLLKKGKTFGGRPRTVTTDILTRDGKDIAFADYSPTWKFHRKMVHSALCMFGEGTVAIEQIISREAASLCQTLTSFQRIPLDMAPELIRAVTNVVCSLCFNTRYKRGDAEFETMLKYSKGIVDTVAKDSLVDIFPWLQIFPNKDLDILRQSVAARDQLLQKKINEHKDAFCGETVKDLVDALLKAKLNMENNNSNVSQDVGLTEDHILMTVGDIFGAGVETTSTVLKWAVAYLLHYPEVQKKIQEELDVKVGFGRYPLLSDRKILHYTEAAISEVLRIRPVSPLLIPHVALKESSIGEYTIPKEARVVINLWSLHHDEKEWVNPHLFSPDRFLDENGNRVYSPSPSFLPFGAGIRVCLGEALAKMEVFLFLSWILQRFTLEVPEGDPLPDLEGKFGVVIQVKPFKVIAKLREVWKNIEIVT</sequence>
<organism>
    <name type="scientific">Rana dybowskii</name>
    <name type="common">Dybovsky's frog</name>
    <name type="synonym">Korean brown frog</name>
    <dbReference type="NCBI Taxonomy" id="71582"/>
    <lineage>
        <taxon>Eukaryota</taxon>
        <taxon>Metazoa</taxon>
        <taxon>Chordata</taxon>
        <taxon>Craniata</taxon>
        <taxon>Vertebrata</taxon>
        <taxon>Euteleostomi</taxon>
        <taxon>Amphibia</taxon>
        <taxon>Batrachia</taxon>
        <taxon>Anura</taxon>
        <taxon>Neobatrachia</taxon>
        <taxon>Ranoidea</taxon>
        <taxon>Ranidae</taxon>
        <taxon>Rana</taxon>
        <taxon>Rana</taxon>
    </lineage>
</organism>
<comment type="function">
    <text>Conversion of pregnenolone and progesterone to their 17-alpha-hydroxylated products and subsequently to dehydroepiandrosterone (DHEA) and androstenedione. Catalyzes both the 17-alpha-hydroxylation and the 17,20-lyase reaction.</text>
</comment>
<comment type="catalytic activity">
    <reaction evidence="2">
        <text>a C21-steroid + reduced [NADPH--hemoprotein reductase] + O2 = a 17alpha-hydroxy-C21-steroid + oxidized [NADPH--hemoprotein reductase] + H2O + H(+)</text>
        <dbReference type="Rhea" id="RHEA:65760"/>
        <dbReference type="Rhea" id="RHEA-COMP:11964"/>
        <dbReference type="Rhea" id="RHEA-COMP:11965"/>
        <dbReference type="ChEBI" id="CHEBI:15377"/>
        <dbReference type="ChEBI" id="CHEBI:15378"/>
        <dbReference type="ChEBI" id="CHEBI:15379"/>
        <dbReference type="ChEBI" id="CHEBI:57618"/>
        <dbReference type="ChEBI" id="CHEBI:58210"/>
        <dbReference type="ChEBI" id="CHEBI:61313"/>
        <dbReference type="ChEBI" id="CHEBI:138141"/>
        <dbReference type="EC" id="1.14.14.19"/>
    </reaction>
</comment>
<comment type="catalytic activity">
    <reaction evidence="2">
        <text>17alpha-hydroxyprogesterone + reduced [NADPH--hemoprotein reductase] + O2 = androst-4-ene-3,17-dione + acetate + oxidized [NADPH--hemoprotein reductase] + H2O + 2 H(+)</text>
        <dbReference type="Rhea" id="RHEA:14753"/>
        <dbReference type="Rhea" id="RHEA-COMP:11964"/>
        <dbReference type="Rhea" id="RHEA-COMP:11965"/>
        <dbReference type="ChEBI" id="CHEBI:15377"/>
        <dbReference type="ChEBI" id="CHEBI:15378"/>
        <dbReference type="ChEBI" id="CHEBI:15379"/>
        <dbReference type="ChEBI" id="CHEBI:16422"/>
        <dbReference type="ChEBI" id="CHEBI:17252"/>
        <dbReference type="ChEBI" id="CHEBI:30089"/>
        <dbReference type="ChEBI" id="CHEBI:57618"/>
        <dbReference type="ChEBI" id="CHEBI:58210"/>
        <dbReference type="EC" id="1.14.14.32"/>
    </reaction>
</comment>
<comment type="catalytic activity">
    <reaction evidence="2">
        <text>17alpha-hydroxypregnenolone + reduced [NADPH--hemoprotein reductase] + O2 = 3beta-hydroxyandrost-5-en-17-one + acetate + oxidized [NADPH--hemoprotein reductase] + H2O + 2 H(+)</text>
        <dbReference type="Rhea" id="RHEA:50244"/>
        <dbReference type="Rhea" id="RHEA-COMP:11964"/>
        <dbReference type="Rhea" id="RHEA-COMP:11965"/>
        <dbReference type="ChEBI" id="CHEBI:15377"/>
        <dbReference type="ChEBI" id="CHEBI:15378"/>
        <dbReference type="ChEBI" id="CHEBI:15379"/>
        <dbReference type="ChEBI" id="CHEBI:28689"/>
        <dbReference type="ChEBI" id="CHEBI:28750"/>
        <dbReference type="ChEBI" id="CHEBI:30089"/>
        <dbReference type="ChEBI" id="CHEBI:57618"/>
        <dbReference type="ChEBI" id="CHEBI:58210"/>
        <dbReference type="EC" id="1.14.14.32"/>
    </reaction>
</comment>
<comment type="cofactor">
    <cofactor evidence="1">
        <name>heme</name>
        <dbReference type="ChEBI" id="CHEBI:30413"/>
    </cofactor>
</comment>
<comment type="pathway">
    <text>Lipid metabolism; steroid biosynthesis.</text>
</comment>
<comment type="subcellular location">
    <subcellularLocation>
        <location evidence="3">Membrane</location>
    </subcellularLocation>
</comment>
<comment type="similarity">
    <text evidence="3">Belongs to the cytochrome P450 family.</text>
</comment>
<reference key="1">
    <citation type="submission" date="1998-01" db="EMBL/GenBank/DDBJ databases">
        <title>Cloning and characterization of cDNA encoding 17-alpha-hydroxylase/17,20 lyase (P450c17) in amphibia (Rana dybowskii).</title>
        <authorList>
            <person name="Choi H.H."/>
            <person name="Kang H.M."/>
            <person name="Choi H.S."/>
            <person name="Kwon H.B."/>
        </authorList>
    </citation>
    <scope>NUCLEOTIDE SEQUENCE [MRNA]</scope>
</reference>
<keyword id="KW-0349">Heme</keyword>
<keyword id="KW-0408">Iron</keyword>
<keyword id="KW-0443">Lipid metabolism</keyword>
<keyword id="KW-0456">Lyase</keyword>
<keyword id="KW-0472">Membrane</keyword>
<keyword id="KW-0479">Metal-binding</keyword>
<keyword id="KW-0503">Monooxygenase</keyword>
<keyword id="KW-0560">Oxidoreductase</keyword>
<keyword id="KW-0755">Steroidogenesis</keyword>
<gene>
    <name type="primary">CYP17A1</name>
    <name type="synonym">CYP17</name>
</gene>
<proteinExistence type="evidence at transcript level"/>
<accession>O57525</accession>
<evidence type="ECO:0000250" key="1"/>
<evidence type="ECO:0000250" key="2">
    <source>
        <dbReference type="UniProtKB" id="P05093"/>
    </source>
</evidence>
<evidence type="ECO:0000305" key="3"/>
<protein>
    <recommendedName>
        <fullName>Steroid 17-alpha-hydroxylase/17,20 lyase</fullName>
        <ecNumber evidence="2">1.14.14.19</ecNumber>
        <ecNumber evidence="2">1.14.14.32</ecNumber>
    </recommendedName>
    <alternativeName>
        <fullName>17-alpha-hydroxyprogesterone aldolase</fullName>
    </alternativeName>
    <alternativeName>
        <fullName>CYPXVII</fullName>
    </alternativeName>
    <alternativeName>
        <fullName>Cytochrome P450 17A1</fullName>
    </alternativeName>
    <alternativeName>
        <fullName>Cytochrome P450-C17</fullName>
        <shortName>Cytochrome P450c17</shortName>
    </alternativeName>
</protein>
<name>CP17A_RANDY</name>